<name>RL30_LACDA</name>
<protein>
    <recommendedName>
        <fullName evidence="1">Large ribosomal subunit protein uL30</fullName>
    </recommendedName>
    <alternativeName>
        <fullName evidence="2">50S ribosomal protein L30</fullName>
    </alternativeName>
</protein>
<comment type="subunit">
    <text evidence="1">Part of the 50S ribosomal subunit.</text>
</comment>
<comment type="similarity">
    <text evidence="1">Belongs to the universal ribosomal protein uL30 family.</text>
</comment>
<dbReference type="EMBL" id="CR954253">
    <property type="protein sequence ID" value="CAI97249.1"/>
    <property type="molecule type" value="Genomic_DNA"/>
</dbReference>
<dbReference type="RefSeq" id="WP_002878183.1">
    <property type="nucleotide sequence ID" value="NZ_JQAV01000001.1"/>
</dbReference>
<dbReference type="SMR" id="Q1GBK0"/>
<dbReference type="STRING" id="390333.Ldb0414"/>
<dbReference type="GeneID" id="69668444"/>
<dbReference type="KEGG" id="ldb:Ldb0414"/>
<dbReference type="PATRIC" id="fig|390333.13.peg.377"/>
<dbReference type="eggNOG" id="COG1841">
    <property type="taxonomic scope" value="Bacteria"/>
</dbReference>
<dbReference type="HOGENOM" id="CLU_131047_2_1_9"/>
<dbReference type="BioCyc" id="LDEL390333:LDB_RS01760-MONOMER"/>
<dbReference type="Proteomes" id="UP000001259">
    <property type="component" value="Chromosome"/>
</dbReference>
<dbReference type="GO" id="GO:0022625">
    <property type="term" value="C:cytosolic large ribosomal subunit"/>
    <property type="evidence" value="ECO:0007669"/>
    <property type="project" value="TreeGrafter"/>
</dbReference>
<dbReference type="GO" id="GO:0003735">
    <property type="term" value="F:structural constituent of ribosome"/>
    <property type="evidence" value="ECO:0007669"/>
    <property type="project" value="InterPro"/>
</dbReference>
<dbReference type="GO" id="GO:0006412">
    <property type="term" value="P:translation"/>
    <property type="evidence" value="ECO:0007669"/>
    <property type="project" value="UniProtKB-UniRule"/>
</dbReference>
<dbReference type="CDD" id="cd01658">
    <property type="entry name" value="Ribosomal_L30"/>
    <property type="match status" value="1"/>
</dbReference>
<dbReference type="Gene3D" id="3.30.1390.20">
    <property type="entry name" value="Ribosomal protein L30, ferredoxin-like fold domain"/>
    <property type="match status" value="1"/>
</dbReference>
<dbReference type="HAMAP" id="MF_01371_B">
    <property type="entry name" value="Ribosomal_uL30_B"/>
    <property type="match status" value="1"/>
</dbReference>
<dbReference type="InterPro" id="IPR036919">
    <property type="entry name" value="Ribo_uL30_ferredoxin-like_sf"/>
</dbReference>
<dbReference type="InterPro" id="IPR005996">
    <property type="entry name" value="Ribosomal_uL30_bac-type"/>
</dbReference>
<dbReference type="InterPro" id="IPR016082">
    <property type="entry name" value="Ribosomal_uL30_ferredoxin-like"/>
</dbReference>
<dbReference type="NCBIfam" id="TIGR01308">
    <property type="entry name" value="rpmD_bact"/>
    <property type="match status" value="1"/>
</dbReference>
<dbReference type="PANTHER" id="PTHR15892:SF2">
    <property type="entry name" value="LARGE RIBOSOMAL SUBUNIT PROTEIN UL30M"/>
    <property type="match status" value="1"/>
</dbReference>
<dbReference type="PANTHER" id="PTHR15892">
    <property type="entry name" value="MITOCHONDRIAL RIBOSOMAL PROTEIN L30"/>
    <property type="match status" value="1"/>
</dbReference>
<dbReference type="Pfam" id="PF00327">
    <property type="entry name" value="Ribosomal_L30"/>
    <property type="match status" value="1"/>
</dbReference>
<dbReference type="PIRSF" id="PIRSF002211">
    <property type="entry name" value="Ribosomal_L30_bac-type"/>
    <property type="match status" value="1"/>
</dbReference>
<dbReference type="SUPFAM" id="SSF55129">
    <property type="entry name" value="Ribosomal protein L30p/L7e"/>
    <property type="match status" value="1"/>
</dbReference>
<accession>Q1GBK0</accession>
<proteinExistence type="inferred from homology"/>
<keyword id="KW-1185">Reference proteome</keyword>
<keyword id="KW-0687">Ribonucleoprotein</keyword>
<keyword id="KW-0689">Ribosomal protein</keyword>
<sequence>MTDLKITLIRSVAHRLPEQRKVVKALGLGKINSTVVQPDNAATRGALMKIAHLISVEEVNK</sequence>
<feature type="chain" id="PRO_1000056054" description="Large ribosomal subunit protein uL30">
    <location>
        <begin position="1"/>
        <end position="61"/>
    </location>
</feature>
<organism>
    <name type="scientific">Lactobacillus delbrueckii subsp. bulgaricus (strain ATCC 11842 / DSM 20081 / BCRC 10696 / JCM 1002 / NBRC 13953 / NCIMB 11778 / NCTC 12712 / WDCM 00102 / Lb 14)</name>
    <dbReference type="NCBI Taxonomy" id="390333"/>
    <lineage>
        <taxon>Bacteria</taxon>
        <taxon>Bacillati</taxon>
        <taxon>Bacillota</taxon>
        <taxon>Bacilli</taxon>
        <taxon>Lactobacillales</taxon>
        <taxon>Lactobacillaceae</taxon>
        <taxon>Lactobacillus</taxon>
    </lineage>
</organism>
<reference key="1">
    <citation type="journal article" date="2006" name="Proc. Natl. Acad. Sci. U.S.A.">
        <title>The complete genome sequence of Lactobacillus bulgaricus reveals extensive and ongoing reductive evolution.</title>
        <authorList>
            <person name="van de Guchte M."/>
            <person name="Penaud S."/>
            <person name="Grimaldi C."/>
            <person name="Barbe V."/>
            <person name="Bryson K."/>
            <person name="Nicolas P."/>
            <person name="Robert C."/>
            <person name="Oztas S."/>
            <person name="Mangenot S."/>
            <person name="Couloux A."/>
            <person name="Loux V."/>
            <person name="Dervyn R."/>
            <person name="Bossy R."/>
            <person name="Bolotin A."/>
            <person name="Batto J.-M."/>
            <person name="Walunas T."/>
            <person name="Gibrat J.-F."/>
            <person name="Bessieres P."/>
            <person name="Weissenbach J."/>
            <person name="Ehrlich S.D."/>
            <person name="Maguin E."/>
        </authorList>
    </citation>
    <scope>NUCLEOTIDE SEQUENCE [LARGE SCALE GENOMIC DNA]</scope>
    <source>
        <strain>ATCC 11842 / DSM 20081 / BCRC 10696 / JCM 1002 / NBRC 13953 / NCIMB 11778 / NCTC 12712 / WDCM 00102 / Lb 14</strain>
    </source>
</reference>
<gene>
    <name evidence="1" type="primary">rpmD</name>
    <name type="ordered locus">Ldb0414</name>
</gene>
<evidence type="ECO:0000255" key="1">
    <source>
        <dbReference type="HAMAP-Rule" id="MF_01371"/>
    </source>
</evidence>
<evidence type="ECO:0000305" key="2"/>